<feature type="chain" id="PRO_1000187888" description="Beta-ketoacyl-[acyl-carrier-protein] synthase III">
    <location>
        <begin position="1"/>
        <end position="335"/>
    </location>
</feature>
<feature type="region of interest" description="ACP-binding" evidence="1">
    <location>
        <begin position="257"/>
        <end position="261"/>
    </location>
</feature>
<feature type="active site" evidence="1">
    <location>
        <position position="116"/>
    </location>
</feature>
<feature type="active site" evidence="1">
    <location>
        <position position="256"/>
    </location>
</feature>
<feature type="active site" evidence="1">
    <location>
        <position position="286"/>
    </location>
</feature>
<dbReference type="EC" id="2.3.1.180" evidence="1"/>
<dbReference type="EMBL" id="AP009380">
    <property type="protein sequence ID" value="BAG32708.1"/>
    <property type="molecule type" value="Genomic_DNA"/>
</dbReference>
<dbReference type="RefSeq" id="WP_012457314.1">
    <property type="nucleotide sequence ID" value="NC_010729.1"/>
</dbReference>
<dbReference type="SMR" id="B2RH63"/>
<dbReference type="GeneID" id="29255434"/>
<dbReference type="KEGG" id="pgn:PGN_0189"/>
<dbReference type="eggNOG" id="COG0332">
    <property type="taxonomic scope" value="Bacteria"/>
</dbReference>
<dbReference type="HOGENOM" id="CLU_039592_3_1_10"/>
<dbReference type="OrthoDB" id="9815506at2"/>
<dbReference type="BioCyc" id="PGIN431947:G1G2V-205-MONOMER"/>
<dbReference type="UniPathway" id="UPA00094"/>
<dbReference type="Proteomes" id="UP000008842">
    <property type="component" value="Chromosome"/>
</dbReference>
<dbReference type="GO" id="GO:0005737">
    <property type="term" value="C:cytoplasm"/>
    <property type="evidence" value="ECO:0007669"/>
    <property type="project" value="UniProtKB-SubCell"/>
</dbReference>
<dbReference type="GO" id="GO:0004315">
    <property type="term" value="F:3-oxoacyl-[acyl-carrier-protein] synthase activity"/>
    <property type="evidence" value="ECO:0007669"/>
    <property type="project" value="InterPro"/>
</dbReference>
<dbReference type="GO" id="GO:0033818">
    <property type="term" value="F:beta-ketoacyl-acyl-carrier-protein synthase III activity"/>
    <property type="evidence" value="ECO:0007669"/>
    <property type="project" value="UniProtKB-UniRule"/>
</dbReference>
<dbReference type="GO" id="GO:0006633">
    <property type="term" value="P:fatty acid biosynthetic process"/>
    <property type="evidence" value="ECO:0007669"/>
    <property type="project" value="UniProtKB-UniRule"/>
</dbReference>
<dbReference type="GO" id="GO:0044550">
    <property type="term" value="P:secondary metabolite biosynthetic process"/>
    <property type="evidence" value="ECO:0007669"/>
    <property type="project" value="TreeGrafter"/>
</dbReference>
<dbReference type="CDD" id="cd00830">
    <property type="entry name" value="KAS_III"/>
    <property type="match status" value="1"/>
</dbReference>
<dbReference type="FunFam" id="3.40.47.10:FF:000004">
    <property type="entry name" value="3-oxoacyl-[acyl-carrier-protein] synthase 3"/>
    <property type="match status" value="1"/>
</dbReference>
<dbReference type="Gene3D" id="3.40.47.10">
    <property type="match status" value="1"/>
</dbReference>
<dbReference type="HAMAP" id="MF_01815">
    <property type="entry name" value="FabH"/>
    <property type="match status" value="1"/>
</dbReference>
<dbReference type="InterPro" id="IPR013747">
    <property type="entry name" value="ACP_syn_III_C"/>
</dbReference>
<dbReference type="InterPro" id="IPR013751">
    <property type="entry name" value="ACP_syn_III_N"/>
</dbReference>
<dbReference type="InterPro" id="IPR004655">
    <property type="entry name" value="FabH"/>
</dbReference>
<dbReference type="InterPro" id="IPR016039">
    <property type="entry name" value="Thiolase-like"/>
</dbReference>
<dbReference type="NCBIfam" id="TIGR00747">
    <property type="entry name" value="fabH"/>
    <property type="match status" value="1"/>
</dbReference>
<dbReference type="NCBIfam" id="NF006829">
    <property type="entry name" value="PRK09352.1"/>
    <property type="match status" value="1"/>
</dbReference>
<dbReference type="PANTHER" id="PTHR34069">
    <property type="entry name" value="3-OXOACYL-[ACYL-CARRIER-PROTEIN] SYNTHASE 3"/>
    <property type="match status" value="1"/>
</dbReference>
<dbReference type="PANTHER" id="PTHR34069:SF2">
    <property type="entry name" value="BETA-KETOACYL-[ACYL-CARRIER-PROTEIN] SYNTHASE III"/>
    <property type="match status" value="1"/>
</dbReference>
<dbReference type="Pfam" id="PF08545">
    <property type="entry name" value="ACP_syn_III"/>
    <property type="match status" value="1"/>
</dbReference>
<dbReference type="Pfam" id="PF08541">
    <property type="entry name" value="ACP_syn_III_C"/>
    <property type="match status" value="1"/>
</dbReference>
<dbReference type="SUPFAM" id="SSF53901">
    <property type="entry name" value="Thiolase-like"/>
    <property type="match status" value="1"/>
</dbReference>
<protein>
    <recommendedName>
        <fullName evidence="1">Beta-ketoacyl-[acyl-carrier-protein] synthase III</fullName>
        <shortName evidence="1">Beta-ketoacyl-ACP synthase III</shortName>
        <shortName evidence="1">KAS III</shortName>
        <ecNumber evidence="1">2.3.1.180</ecNumber>
    </recommendedName>
    <alternativeName>
        <fullName evidence="1">3-oxoacyl-[acyl-carrier-protein] synthase 3</fullName>
    </alternativeName>
    <alternativeName>
        <fullName evidence="1">3-oxoacyl-[acyl-carrier-protein] synthase III</fullName>
    </alternativeName>
</protein>
<name>FABH_PORG3</name>
<evidence type="ECO:0000255" key="1">
    <source>
        <dbReference type="HAMAP-Rule" id="MF_01815"/>
    </source>
</evidence>
<proteinExistence type="inferred from homology"/>
<comment type="function">
    <text evidence="1">Catalyzes the condensation reaction of fatty acid synthesis by the addition to an acyl acceptor of two carbons from malonyl-ACP. Catalyzes the first condensation reaction which initiates fatty acid synthesis and may therefore play a role in governing the total rate of fatty acid production. Possesses both acetoacetyl-ACP synthase and acetyl transacylase activities. Its substrate specificity determines the biosynthesis of branched-chain and/or straight-chain of fatty acids.</text>
</comment>
<comment type="catalytic activity">
    <reaction evidence="1">
        <text>malonyl-[ACP] + acetyl-CoA + H(+) = 3-oxobutanoyl-[ACP] + CO2 + CoA</text>
        <dbReference type="Rhea" id="RHEA:12080"/>
        <dbReference type="Rhea" id="RHEA-COMP:9623"/>
        <dbReference type="Rhea" id="RHEA-COMP:9625"/>
        <dbReference type="ChEBI" id="CHEBI:15378"/>
        <dbReference type="ChEBI" id="CHEBI:16526"/>
        <dbReference type="ChEBI" id="CHEBI:57287"/>
        <dbReference type="ChEBI" id="CHEBI:57288"/>
        <dbReference type="ChEBI" id="CHEBI:78449"/>
        <dbReference type="ChEBI" id="CHEBI:78450"/>
        <dbReference type="EC" id="2.3.1.180"/>
    </reaction>
</comment>
<comment type="pathway">
    <text evidence="1">Lipid metabolism; fatty acid biosynthesis.</text>
</comment>
<comment type="subunit">
    <text evidence="1">Homodimer.</text>
</comment>
<comment type="subcellular location">
    <subcellularLocation>
        <location evidence="1">Cytoplasm</location>
    </subcellularLocation>
</comment>
<comment type="domain">
    <text evidence="1">The last Arg residue of the ACP-binding site is essential for the weak association between ACP/AcpP and FabH.</text>
</comment>
<comment type="similarity">
    <text evidence="1">Belongs to the thiolase-like superfamily. FabH family.</text>
</comment>
<gene>
    <name evidence="1" type="primary">fabH</name>
    <name type="ordered locus">PGN_0189</name>
</gene>
<organism>
    <name type="scientific">Porphyromonas gingivalis (strain ATCC 33277 / DSM 20709 / CIP 103683 / JCM 12257 / NCTC 11834 / 2561)</name>
    <dbReference type="NCBI Taxonomy" id="431947"/>
    <lineage>
        <taxon>Bacteria</taxon>
        <taxon>Pseudomonadati</taxon>
        <taxon>Bacteroidota</taxon>
        <taxon>Bacteroidia</taxon>
        <taxon>Bacteroidales</taxon>
        <taxon>Porphyromonadaceae</taxon>
        <taxon>Porphyromonas</taxon>
    </lineage>
</organism>
<reference key="1">
    <citation type="journal article" date="2008" name="DNA Res.">
        <title>Determination of the genome sequence of Porphyromonas gingivalis strain ATCC 33277 and genomic comparison with strain W83 revealed extensive genome rearrangements in P. gingivalis.</title>
        <authorList>
            <person name="Naito M."/>
            <person name="Hirakawa H."/>
            <person name="Yamashita A."/>
            <person name="Ohara N."/>
            <person name="Shoji M."/>
            <person name="Yukitake H."/>
            <person name="Nakayama K."/>
            <person name="Toh H."/>
            <person name="Yoshimura F."/>
            <person name="Kuhara S."/>
            <person name="Hattori M."/>
            <person name="Hayashi T."/>
            <person name="Nakayama K."/>
        </authorList>
    </citation>
    <scope>NUCLEOTIDE SEQUENCE [LARGE SCALE GENOMIC DNA]</scope>
    <source>
        <strain>ATCC 33277 / DSM 20709 / CIP 103683 / JCM 12257 / NCTC 11834 / 2561</strain>
    </source>
</reference>
<keyword id="KW-0012">Acyltransferase</keyword>
<keyword id="KW-0963">Cytoplasm</keyword>
<keyword id="KW-0275">Fatty acid biosynthesis</keyword>
<keyword id="KW-0276">Fatty acid metabolism</keyword>
<keyword id="KW-0444">Lipid biosynthesis</keyword>
<keyword id="KW-0443">Lipid metabolism</keyword>
<keyword id="KW-0511">Multifunctional enzyme</keyword>
<keyword id="KW-0808">Transferase</keyword>
<accession>B2RH63</accession>
<sequence length="335" mass="37184">MNKINAAITAVGAYLPEDVITNDDLEKMVDTNDEWIMTRVGIKERRILRDKNKGASYLAIRAAQDLFDRHGIDPKSIDGLILATNSSDYHFPSTASIVAHEIGCGDIFSFDMQAACPTFIYALEVGANFIRSGRYSKILVIATEKMTAFTDYTDRATCPLFGDGAGCVLLEATEEEVGVMDAVLHSNGIGKDHLIMKAGGSACPATHETVDNRWHYVYQEGQVVFKHAVVDMCNSCVEIMERNNLSHDDITWVVPHQANLRIIDAVARRMGVPYEKVMVNIERYGNTSSATIPICLWEWEHKLKKGDVLVMTSFGAGFTWGAVYVKWAYDGSTVR</sequence>